<dbReference type="EC" id="2.7.4.6" evidence="1"/>
<dbReference type="EMBL" id="AE017143">
    <property type="protein sequence ID" value="AAP95927.1"/>
    <property type="molecule type" value="Genomic_DNA"/>
</dbReference>
<dbReference type="RefSeq" id="WP_010944976.1">
    <property type="nucleotide sequence ID" value="NC_002940.2"/>
</dbReference>
<dbReference type="SMR" id="Q7VMD0"/>
<dbReference type="STRING" id="233412.HD_1053"/>
<dbReference type="KEGG" id="hdu:HD_1053"/>
<dbReference type="eggNOG" id="COG0105">
    <property type="taxonomic scope" value="Bacteria"/>
</dbReference>
<dbReference type="HOGENOM" id="CLU_060216_8_1_6"/>
<dbReference type="OrthoDB" id="9801161at2"/>
<dbReference type="Proteomes" id="UP000001022">
    <property type="component" value="Chromosome"/>
</dbReference>
<dbReference type="GO" id="GO:0005737">
    <property type="term" value="C:cytoplasm"/>
    <property type="evidence" value="ECO:0007669"/>
    <property type="project" value="UniProtKB-SubCell"/>
</dbReference>
<dbReference type="GO" id="GO:0005524">
    <property type="term" value="F:ATP binding"/>
    <property type="evidence" value="ECO:0007669"/>
    <property type="project" value="UniProtKB-UniRule"/>
</dbReference>
<dbReference type="GO" id="GO:0046872">
    <property type="term" value="F:metal ion binding"/>
    <property type="evidence" value="ECO:0007669"/>
    <property type="project" value="UniProtKB-KW"/>
</dbReference>
<dbReference type="GO" id="GO:0004550">
    <property type="term" value="F:nucleoside diphosphate kinase activity"/>
    <property type="evidence" value="ECO:0007669"/>
    <property type="project" value="UniProtKB-UniRule"/>
</dbReference>
<dbReference type="GO" id="GO:0006241">
    <property type="term" value="P:CTP biosynthetic process"/>
    <property type="evidence" value="ECO:0007669"/>
    <property type="project" value="UniProtKB-UniRule"/>
</dbReference>
<dbReference type="GO" id="GO:0006183">
    <property type="term" value="P:GTP biosynthetic process"/>
    <property type="evidence" value="ECO:0007669"/>
    <property type="project" value="UniProtKB-UniRule"/>
</dbReference>
<dbReference type="GO" id="GO:0006228">
    <property type="term" value="P:UTP biosynthetic process"/>
    <property type="evidence" value="ECO:0007669"/>
    <property type="project" value="UniProtKB-UniRule"/>
</dbReference>
<dbReference type="CDD" id="cd04413">
    <property type="entry name" value="NDPk_I"/>
    <property type="match status" value="1"/>
</dbReference>
<dbReference type="FunFam" id="3.30.70.141:FF:000003">
    <property type="entry name" value="Nucleoside diphosphate kinase"/>
    <property type="match status" value="1"/>
</dbReference>
<dbReference type="Gene3D" id="3.30.70.141">
    <property type="entry name" value="Nucleoside diphosphate kinase-like domain"/>
    <property type="match status" value="1"/>
</dbReference>
<dbReference type="HAMAP" id="MF_00451">
    <property type="entry name" value="NDP_kinase"/>
    <property type="match status" value="1"/>
</dbReference>
<dbReference type="InterPro" id="IPR034907">
    <property type="entry name" value="NDK-like_dom"/>
</dbReference>
<dbReference type="InterPro" id="IPR036850">
    <property type="entry name" value="NDK-like_dom_sf"/>
</dbReference>
<dbReference type="InterPro" id="IPR001564">
    <property type="entry name" value="Nucleoside_diP_kinase"/>
</dbReference>
<dbReference type="InterPro" id="IPR023005">
    <property type="entry name" value="Nucleoside_diP_kinase_AS"/>
</dbReference>
<dbReference type="NCBIfam" id="NF001908">
    <property type="entry name" value="PRK00668.1"/>
    <property type="match status" value="1"/>
</dbReference>
<dbReference type="PANTHER" id="PTHR46161">
    <property type="entry name" value="NUCLEOSIDE DIPHOSPHATE KINASE"/>
    <property type="match status" value="1"/>
</dbReference>
<dbReference type="PANTHER" id="PTHR46161:SF3">
    <property type="entry name" value="NUCLEOSIDE DIPHOSPHATE KINASE DDB_G0292928-RELATED"/>
    <property type="match status" value="1"/>
</dbReference>
<dbReference type="Pfam" id="PF00334">
    <property type="entry name" value="NDK"/>
    <property type="match status" value="1"/>
</dbReference>
<dbReference type="PRINTS" id="PR01243">
    <property type="entry name" value="NUCDPKINASE"/>
</dbReference>
<dbReference type="SMART" id="SM00562">
    <property type="entry name" value="NDK"/>
    <property type="match status" value="1"/>
</dbReference>
<dbReference type="SUPFAM" id="SSF54919">
    <property type="entry name" value="Nucleoside diphosphate kinase, NDK"/>
    <property type="match status" value="1"/>
</dbReference>
<dbReference type="PROSITE" id="PS00469">
    <property type="entry name" value="NDPK"/>
    <property type="match status" value="1"/>
</dbReference>
<dbReference type="PROSITE" id="PS51374">
    <property type="entry name" value="NDPK_LIKE"/>
    <property type="match status" value="1"/>
</dbReference>
<evidence type="ECO:0000255" key="1">
    <source>
        <dbReference type="HAMAP-Rule" id="MF_00451"/>
    </source>
</evidence>
<organism>
    <name type="scientific">Haemophilus ducreyi (strain 35000HP / ATCC 700724)</name>
    <dbReference type="NCBI Taxonomy" id="233412"/>
    <lineage>
        <taxon>Bacteria</taxon>
        <taxon>Pseudomonadati</taxon>
        <taxon>Pseudomonadota</taxon>
        <taxon>Gammaproteobacteria</taxon>
        <taxon>Pasteurellales</taxon>
        <taxon>Pasteurellaceae</taxon>
        <taxon>Haemophilus</taxon>
    </lineage>
</organism>
<name>NDK_HAEDU</name>
<feature type="chain" id="PRO_0000136989" description="Nucleoside diphosphate kinase">
    <location>
        <begin position="1"/>
        <end position="138"/>
    </location>
</feature>
<feature type="active site" description="Pros-phosphohistidine intermediate" evidence="1">
    <location>
        <position position="116"/>
    </location>
</feature>
<feature type="binding site" evidence="1">
    <location>
        <position position="10"/>
    </location>
    <ligand>
        <name>ATP</name>
        <dbReference type="ChEBI" id="CHEBI:30616"/>
    </ligand>
</feature>
<feature type="binding site" evidence="1">
    <location>
        <position position="58"/>
    </location>
    <ligand>
        <name>ATP</name>
        <dbReference type="ChEBI" id="CHEBI:30616"/>
    </ligand>
</feature>
<feature type="binding site" evidence="1">
    <location>
        <position position="86"/>
    </location>
    <ligand>
        <name>ATP</name>
        <dbReference type="ChEBI" id="CHEBI:30616"/>
    </ligand>
</feature>
<feature type="binding site" evidence="1">
    <location>
        <position position="92"/>
    </location>
    <ligand>
        <name>ATP</name>
        <dbReference type="ChEBI" id="CHEBI:30616"/>
    </ligand>
</feature>
<feature type="binding site" evidence="1">
    <location>
        <position position="103"/>
    </location>
    <ligand>
        <name>ATP</name>
        <dbReference type="ChEBI" id="CHEBI:30616"/>
    </ligand>
</feature>
<feature type="binding site" evidence="1">
    <location>
        <position position="113"/>
    </location>
    <ligand>
        <name>ATP</name>
        <dbReference type="ChEBI" id="CHEBI:30616"/>
    </ligand>
</feature>
<comment type="function">
    <text evidence="1">Major role in the synthesis of nucleoside triphosphates other than ATP. The ATP gamma phosphate is transferred to the NDP beta phosphate via a ping-pong mechanism, using a phosphorylated active-site intermediate.</text>
</comment>
<comment type="catalytic activity">
    <reaction evidence="1">
        <text>a 2'-deoxyribonucleoside 5'-diphosphate + ATP = a 2'-deoxyribonucleoside 5'-triphosphate + ADP</text>
        <dbReference type="Rhea" id="RHEA:44640"/>
        <dbReference type="ChEBI" id="CHEBI:30616"/>
        <dbReference type="ChEBI" id="CHEBI:61560"/>
        <dbReference type="ChEBI" id="CHEBI:73316"/>
        <dbReference type="ChEBI" id="CHEBI:456216"/>
        <dbReference type="EC" id="2.7.4.6"/>
    </reaction>
</comment>
<comment type="catalytic activity">
    <reaction evidence="1">
        <text>a ribonucleoside 5'-diphosphate + ATP = a ribonucleoside 5'-triphosphate + ADP</text>
        <dbReference type="Rhea" id="RHEA:18113"/>
        <dbReference type="ChEBI" id="CHEBI:30616"/>
        <dbReference type="ChEBI" id="CHEBI:57930"/>
        <dbReference type="ChEBI" id="CHEBI:61557"/>
        <dbReference type="ChEBI" id="CHEBI:456216"/>
        <dbReference type="EC" id="2.7.4.6"/>
    </reaction>
</comment>
<comment type="cofactor">
    <cofactor evidence="1">
        <name>Mg(2+)</name>
        <dbReference type="ChEBI" id="CHEBI:18420"/>
    </cofactor>
</comment>
<comment type="subunit">
    <text evidence="1">Homotetramer.</text>
</comment>
<comment type="subcellular location">
    <subcellularLocation>
        <location evidence="1">Cytoplasm</location>
    </subcellularLocation>
</comment>
<comment type="similarity">
    <text evidence="1">Belongs to the NDK family.</text>
</comment>
<protein>
    <recommendedName>
        <fullName evidence="1">Nucleoside diphosphate kinase</fullName>
        <shortName evidence="1">NDK</shortName>
        <shortName evidence="1">NDP kinase</shortName>
        <ecNumber evidence="1">2.7.4.6</ecNumber>
    </recommendedName>
    <alternativeName>
        <fullName evidence="1">Nucleoside-2-P kinase</fullName>
    </alternativeName>
</protein>
<reference key="1">
    <citation type="submission" date="2003-06" db="EMBL/GenBank/DDBJ databases">
        <title>The complete genome sequence of Haemophilus ducreyi.</title>
        <authorList>
            <person name="Munson R.S. Jr."/>
            <person name="Ray W.C."/>
            <person name="Mahairas G."/>
            <person name="Sabo P."/>
            <person name="Mungur R."/>
            <person name="Johnson L."/>
            <person name="Nguyen D."/>
            <person name="Wang J."/>
            <person name="Forst C."/>
            <person name="Hood L."/>
        </authorList>
    </citation>
    <scope>NUCLEOTIDE SEQUENCE [LARGE SCALE GENOMIC DNA]</scope>
    <source>
        <strain>35000HP / ATCC 700724</strain>
    </source>
</reference>
<accession>Q7VMD0</accession>
<proteinExistence type="inferred from homology"/>
<gene>
    <name evidence="1" type="primary">ndk</name>
    <name type="ordered locus">HD_1053</name>
</gene>
<sequence length="138" mass="15464">MLQQTLCLIKPDATQRNLIGKIISYLENAGLKIKAIKKLQLTQAQAEKFYLEHQDKPFFASLVGFMISAPIVAIVLEGENAIAHYRELMGATNPEQREAGTIRALYAISNQENSVHGSDSETSAKREIDYFFSKEEIC</sequence>
<keyword id="KW-0067">ATP-binding</keyword>
<keyword id="KW-0963">Cytoplasm</keyword>
<keyword id="KW-0418">Kinase</keyword>
<keyword id="KW-0460">Magnesium</keyword>
<keyword id="KW-0479">Metal-binding</keyword>
<keyword id="KW-0546">Nucleotide metabolism</keyword>
<keyword id="KW-0547">Nucleotide-binding</keyword>
<keyword id="KW-0597">Phosphoprotein</keyword>
<keyword id="KW-1185">Reference proteome</keyword>
<keyword id="KW-0808">Transferase</keyword>